<sequence>MIPGEIIAASGDIELNAGAPTVTLEVSNTGDRPVQVGSHYHFAETNAGLSFDRAAAHGKRLDIPAGTAVRFEPGQTRSVTLIPLSGKREVYGFRQLVMGKL</sequence>
<proteinExistence type="inferred from homology"/>
<organism>
    <name type="scientific">Rhizobium leguminosarum bv. trifolii (strain WSM2304)</name>
    <dbReference type="NCBI Taxonomy" id="395492"/>
    <lineage>
        <taxon>Bacteria</taxon>
        <taxon>Pseudomonadati</taxon>
        <taxon>Pseudomonadota</taxon>
        <taxon>Alphaproteobacteria</taxon>
        <taxon>Hyphomicrobiales</taxon>
        <taxon>Rhizobiaceae</taxon>
        <taxon>Rhizobium/Agrobacterium group</taxon>
        <taxon>Rhizobium</taxon>
    </lineage>
</organism>
<dbReference type="EC" id="3.5.1.5" evidence="1"/>
<dbReference type="EMBL" id="CP001191">
    <property type="protein sequence ID" value="ACI56321.1"/>
    <property type="molecule type" value="Genomic_DNA"/>
</dbReference>
<dbReference type="RefSeq" id="WP_003542314.1">
    <property type="nucleotide sequence ID" value="NC_011369.1"/>
</dbReference>
<dbReference type="SMR" id="B5ZMP3"/>
<dbReference type="STRING" id="395492.Rleg2_3054"/>
<dbReference type="KEGG" id="rlt:Rleg2_3054"/>
<dbReference type="eggNOG" id="COG0832">
    <property type="taxonomic scope" value="Bacteria"/>
</dbReference>
<dbReference type="HOGENOM" id="CLU_129707_1_1_5"/>
<dbReference type="UniPathway" id="UPA00258">
    <property type="reaction ID" value="UER00370"/>
</dbReference>
<dbReference type="Proteomes" id="UP000008330">
    <property type="component" value="Chromosome"/>
</dbReference>
<dbReference type="GO" id="GO:0035550">
    <property type="term" value="C:urease complex"/>
    <property type="evidence" value="ECO:0007669"/>
    <property type="project" value="InterPro"/>
</dbReference>
<dbReference type="GO" id="GO:0009039">
    <property type="term" value="F:urease activity"/>
    <property type="evidence" value="ECO:0007669"/>
    <property type="project" value="UniProtKB-UniRule"/>
</dbReference>
<dbReference type="GO" id="GO:0043419">
    <property type="term" value="P:urea catabolic process"/>
    <property type="evidence" value="ECO:0007669"/>
    <property type="project" value="UniProtKB-UniRule"/>
</dbReference>
<dbReference type="CDD" id="cd00407">
    <property type="entry name" value="Urease_beta"/>
    <property type="match status" value="1"/>
</dbReference>
<dbReference type="FunFam" id="2.10.150.10:FF:000001">
    <property type="entry name" value="Urease subunit beta"/>
    <property type="match status" value="1"/>
</dbReference>
<dbReference type="Gene3D" id="2.10.150.10">
    <property type="entry name" value="Urease, beta subunit"/>
    <property type="match status" value="1"/>
</dbReference>
<dbReference type="HAMAP" id="MF_01954">
    <property type="entry name" value="Urease_beta"/>
    <property type="match status" value="1"/>
</dbReference>
<dbReference type="InterPro" id="IPR002019">
    <property type="entry name" value="Urease_beta-like"/>
</dbReference>
<dbReference type="InterPro" id="IPR036461">
    <property type="entry name" value="Urease_betasu_sf"/>
</dbReference>
<dbReference type="InterPro" id="IPR050069">
    <property type="entry name" value="Urease_subunit"/>
</dbReference>
<dbReference type="NCBIfam" id="NF009682">
    <property type="entry name" value="PRK13203.1"/>
    <property type="match status" value="1"/>
</dbReference>
<dbReference type="NCBIfam" id="TIGR00192">
    <property type="entry name" value="urease_beta"/>
    <property type="match status" value="1"/>
</dbReference>
<dbReference type="PANTHER" id="PTHR33569">
    <property type="entry name" value="UREASE"/>
    <property type="match status" value="1"/>
</dbReference>
<dbReference type="PANTHER" id="PTHR33569:SF1">
    <property type="entry name" value="UREASE"/>
    <property type="match status" value="1"/>
</dbReference>
<dbReference type="Pfam" id="PF00699">
    <property type="entry name" value="Urease_beta"/>
    <property type="match status" value="1"/>
</dbReference>
<dbReference type="SUPFAM" id="SSF51278">
    <property type="entry name" value="Urease, beta-subunit"/>
    <property type="match status" value="1"/>
</dbReference>
<keyword id="KW-0963">Cytoplasm</keyword>
<keyword id="KW-0378">Hydrolase</keyword>
<keyword id="KW-1185">Reference proteome</keyword>
<evidence type="ECO:0000255" key="1">
    <source>
        <dbReference type="HAMAP-Rule" id="MF_01954"/>
    </source>
</evidence>
<comment type="catalytic activity">
    <reaction evidence="1">
        <text>urea + 2 H2O + H(+) = hydrogencarbonate + 2 NH4(+)</text>
        <dbReference type="Rhea" id="RHEA:20557"/>
        <dbReference type="ChEBI" id="CHEBI:15377"/>
        <dbReference type="ChEBI" id="CHEBI:15378"/>
        <dbReference type="ChEBI" id="CHEBI:16199"/>
        <dbReference type="ChEBI" id="CHEBI:17544"/>
        <dbReference type="ChEBI" id="CHEBI:28938"/>
        <dbReference type="EC" id="3.5.1.5"/>
    </reaction>
</comment>
<comment type="pathway">
    <text evidence="1">Nitrogen metabolism; urea degradation; CO(2) and NH(3) from urea (urease route): step 1/1.</text>
</comment>
<comment type="subunit">
    <text evidence="1">Heterotrimer of UreA (gamma), UreB (beta) and UreC (alpha) subunits. Three heterotrimers associate to form the active enzyme.</text>
</comment>
<comment type="subcellular location">
    <subcellularLocation>
        <location evidence="1">Cytoplasm</location>
    </subcellularLocation>
</comment>
<comment type="similarity">
    <text evidence="1">Belongs to the urease beta subunit family.</text>
</comment>
<name>URE2_RHILW</name>
<accession>B5ZMP3</accession>
<protein>
    <recommendedName>
        <fullName evidence="1">Urease subunit beta</fullName>
        <ecNumber evidence="1">3.5.1.5</ecNumber>
    </recommendedName>
    <alternativeName>
        <fullName evidence="1">Urea amidohydrolase subunit beta</fullName>
    </alternativeName>
</protein>
<gene>
    <name evidence="1" type="primary">ureB</name>
    <name type="ordered locus">Rleg2_3054</name>
</gene>
<reference key="1">
    <citation type="journal article" date="2010" name="Stand. Genomic Sci.">
        <title>Complete genome sequence of Rhizobium leguminosarum bv trifolii strain WSM2304, an effective microsymbiont of the South American clover Trifolium polymorphum.</title>
        <authorList>
            <person name="Reeve W."/>
            <person name="O'Hara G."/>
            <person name="Chain P."/>
            <person name="Ardley J."/>
            <person name="Brau L."/>
            <person name="Nandesena K."/>
            <person name="Tiwari R."/>
            <person name="Malfatti S."/>
            <person name="Kiss H."/>
            <person name="Lapidus A."/>
            <person name="Copeland A."/>
            <person name="Nolan M."/>
            <person name="Land M."/>
            <person name="Ivanova N."/>
            <person name="Mavromatis K."/>
            <person name="Markowitz V."/>
            <person name="Kyrpides N."/>
            <person name="Melino V."/>
            <person name="Denton M."/>
            <person name="Yates R."/>
            <person name="Howieson J."/>
        </authorList>
    </citation>
    <scope>NUCLEOTIDE SEQUENCE [LARGE SCALE GENOMIC DNA]</scope>
    <source>
        <strain>WSM2304</strain>
    </source>
</reference>
<feature type="chain" id="PRO_1000188938" description="Urease subunit beta">
    <location>
        <begin position="1"/>
        <end position="101"/>
    </location>
</feature>